<dbReference type="EMBL" id="D78193">
    <property type="protein sequence ID" value="BAA11274.1"/>
    <property type="molecule type" value="Genomic_DNA"/>
</dbReference>
<dbReference type="EMBL" id="AL009126">
    <property type="protein sequence ID" value="CAB16053.2"/>
    <property type="molecule type" value="Genomic_DNA"/>
</dbReference>
<dbReference type="PIR" id="F70091">
    <property type="entry name" value="F70091"/>
</dbReference>
<dbReference type="RefSeq" id="WP_003243055.1">
    <property type="nucleotide sequence ID" value="NZ_OZ025638.1"/>
</dbReference>
<dbReference type="FunCoup" id="Q45594">
    <property type="interactions" value="19"/>
</dbReference>
<dbReference type="STRING" id="224308.BSU40160"/>
<dbReference type="MEROPS" id="M50.A09"/>
<dbReference type="PaxDb" id="224308-BSU40160"/>
<dbReference type="EnsemblBacteria" id="CAB16053">
    <property type="protein sequence ID" value="CAB16053"/>
    <property type="gene ID" value="BSU_40160"/>
</dbReference>
<dbReference type="GeneID" id="937745"/>
<dbReference type="KEGG" id="bsu:BSU40160"/>
<dbReference type="PATRIC" id="fig|224308.179.peg.4344"/>
<dbReference type="eggNOG" id="COG1994">
    <property type="taxonomic scope" value="Bacteria"/>
</dbReference>
<dbReference type="InParanoid" id="Q45594"/>
<dbReference type="OrthoDB" id="4640801at2"/>
<dbReference type="BioCyc" id="BSUB:BSU40160-MONOMER"/>
<dbReference type="Proteomes" id="UP000001570">
    <property type="component" value="Chromosome"/>
</dbReference>
<dbReference type="GO" id="GO:0005886">
    <property type="term" value="C:plasma membrane"/>
    <property type="evidence" value="ECO:0007669"/>
    <property type="project" value="UniProtKB-SubCell"/>
</dbReference>
<dbReference type="GO" id="GO:0046872">
    <property type="term" value="F:metal ion binding"/>
    <property type="evidence" value="ECO:0007669"/>
    <property type="project" value="UniProtKB-KW"/>
</dbReference>
<dbReference type="GO" id="GO:0008237">
    <property type="term" value="F:metallopeptidase activity"/>
    <property type="evidence" value="ECO:0007669"/>
    <property type="project" value="UniProtKB-KW"/>
</dbReference>
<dbReference type="GO" id="GO:0006508">
    <property type="term" value="P:proteolysis"/>
    <property type="evidence" value="ECO:0007669"/>
    <property type="project" value="UniProtKB-KW"/>
</dbReference>
<dbReference type="PROSITE" id="PS00142">
    <property type="entry name" value="ZINC_PROTEASE"/>
    <property type="match status" value="1"/>
</dbReference>
<sequence length="252" mass="29942">MKILKYEDEKYEVLVQNNVFIKDKKSGEYYKNSLNSLSDKQLLRFKMYKEKVSPKFFYLFLSFTALMFILNYIHLIKLQNGLSSVFYGWKMWIIIVIYFIMNIVLHELGHIYSLKFFGKNFDKVGFKLNFYVFPAFYVQLNETYMLSRNEKIIVHLFGLFINYLLINTLELINQFTFSSEALTMAFMLFSSTLLWNLIPILNSDGYKILLAFLSLDEYSRFKTNHWLVLTIQIIGIGLAVNSVVHWILYIVN</sequence>
<name>YYDH_BACSU</name>
<proteinExistence type="evidence at transcript level"/>
<reference key="1">
    <citation type="journal article" date="1997" name="DNA Res.">
        <title>Sequence analysis of the 36-kb region between gntZ and trnY genes of Bacillus subtilis genome.</title>
        <authorList>
            <person name="Kasahara Y."/>
            <person name="Nakai S."/>
            <person name="Ogasawara N."/>
        </authorList>
    </citation>
    <scope>NUCLEOTIDE SEQUENCE [GENOMIC DNA]</scope>
    <source>
        <strain>168</strain>
    </source>
</reference>
<reference key="2">
    <citation type="journal article" date="1997" name="Nature">
        <title>The complete genome sequence of the Gram-positive bacterium Bacillus subtilis.</title>
        <authorList>
            <person name="Kunst F."/>
            <person name="Ogasawara N."/>
            <person name="Moszer I."/>
            <person name="Albertini A.M."/>
            <person name="Alloni G."/>
            <person name="Azevedo V."/>
            <person name="Bertero M.G."/>
            <person name="Bessieres P."/>
            <person name="Bolotin A."/>
            <person name="Borchert S."/>
            <person name="Borriss R."/>
            <person name="Boursier L."/>
            <person name="Brans A."/>
            <person name="Braun M."/>
            <person name="Brignell S.C."/>
            <person name="Bron S."/>
            <person name="Brouillet S."/>
            <person name="Bruschi C.V."/>
            <person name="Caldwell B."/>
            <person name="Capuano V."/>
            <person name="Carter N.M."/>
            <person name="Choi S.-K."/>
            <person name="Codani J.-J."/>
            <person name="Connerton I.F."/>
            <person name="Cummings N.J."/>
            <person name="Daniel R.A."/>
            <person name="Denizot F."/>
            <person name="Devine K.M."/>
            <person name="Duesterhoeft A."/>
            <person name="Ehrlich S.D."/>
            <person name="Emmerson P.T."/>
            <person name="Entian K.-D."/>
            <person name="Errington J."/>
            <person name="Fabret C."/>
            <person name="Ferrari E."/>
            <person name="Foulger D."/>
            <person name="Fritz C."/>
            <person name="Fujita M."/>
            <person name="Fujita Y."/>
            <person name="Fuma S."/>
            <person name="Galizzi A."/>
            <person name="Galleron N."/>
            <person name="Ghim S.-Y."/>
            <person name="Glaser P."/>
            <person name="Goffeau A."/>
            <person name="Golightly E.J."/>
            <person name="Grandi G."/>
            <person name="Guiseppi G."/>
            <person name="Guy B.J."/>
            <person name="Haga K."/>
            <person name="Haiech J."/>
            <person name="Harwood C.R."/>
            <person name="Henaut A."/>
            <person name="Hilbert H."/>
            <person name="Holsappel S."/>
            <person name="Hosono S."/>
            <person name="Hullo M.-F."/>
            <person name="Itaya M."/>
            <person name="Jones L.-M."/>
            <person name="Joris B."/>
            <person name="Karamata D."/>
            <person name="Kasahara Y."/>
            <person name="Klaerr-Blanchard M."/>
            <person name="Klein C."/>
            <person name="Kobayashi Y."/>
            <person name="Koetter P."/>
            <person name="Koningstein G."/>
            <person name="Krogh S."/>
            <person name="Kumano M."/>
            <person name="Kurita K."/>
            <person name="Lapidus A."/>
            <person name="Lardinois S."/>
            <person name="Lauber J."/>
            <person name="Lazarevic V."/>
            <person name="Lee S.-M."/>
            <person name="Levine A."/>
            <person name="Liu H."/>
            <person name="Masuda S."/>
            <person name="Mauel C."/>
            <person name="Medigue C."/>
            <person name="Medina N."/>
            <person name="Mellado R.P."/>
            <person name="Mizuno M."/>
            <person name="Moestl D."/>
            <person name="Nakai S."/>
            <person name="Noback M."/>
            <person name="Noone D."/>
            <person name="O'Reilly M."/>
            <person name="Ogawa K."/>
            <person name="Ogiwara A."/>
            <person name="Oudega B."/>
            <person name="Park S.-H."/>
            <person name="Parro V."/>
            <person name="Pohl T.M."/>
            <person name="Portetelle D."/>
            <person name="Porwollik S."/>
            <person name="Prescott A.M."/>
            <person name="Presecan E."/>
            <person name="Pujic P."/>
            <person name="Purnelle B."/>
            <person name="Rapoport G."/>
            <person name="Rey M."/>
            <person name="Reynolds S."/>
            <person name="Rieger M."/>
            <person name="Rivolta C."/>
            <person name="Rocha E."/>
            <person name="Roche B."/>
            <person name="Rose M."/>
            <person name="Sadaie Y."/>
            <person name="Sato T."/>
            <person name="Scanlan E."/>
            <person name="Schleich S."/>
            <person name="Schroeter R."/>
            <person name="Scoffone F."/>
            <person name="Sekiguchi J."/>
            <person name="Sekowska A."/>
            <person name="Seror S.J."/>
            <person name="Serror P."/>
            <person name="Shin B.-S."/>
            <person name="Soldo B."/>
            <person name="Sorokin A."/>
            <person name="Tacconi E."/>
            <person name="Takagi T."/>
            <person name="Takahashi H."/>
            <person name="Takemaru K."/>
            <person name="Takeuchi M."/>
            <person name="Tamakoshi A."/>
            <person name="Tanaka T."/>
            <person name="Terpstra P."/>
            <person name="Tognoni A."/>
            <person name="Tosato V."/>
            <person name="Uchiyama S."/>
            <person name="Vandenbol M."/>
            <person name="Vannier F."/>
            <person name="Vassarotti A."/>
            <person name="Viari A."/>
            <person name="Wambutt R."/>
            <person name="Wedler E."/>
            <person name="Wedler H."/>
            <person name="Weitzenegger T."/>
            <person name="Winters P."/>
            <person name="Wipat A."/>
            <person name="Yamamoto H."/>
            <person name="Yamane K."/>
            <person name="Yasumoto K."/>
            <person name="Yata K."/>
            <person name="Yoshida K."/>
            <person name="Yoshikawa H.-F."/>
            <person name="Zumstein E."/>
            <person name="Yoshikawa H."/>
            <person name="Danchin A."/>
        </authorList>
    </citation>
    <scope>NUCLEOTIDE SEQUENCE [LARGE SCALE GENOMIC DNA]</scope>
    <source>
        <strain>168</strain>
    </source>
</reference>
<reference key="3">
    <citation type="journal article" date="2009" name="Microbiology">
        <title>From a consortium sequence to a unified sequence: the Bacillus subtilis 168 reference genome a decade later.</title>
        <authorList>
            <person name="Barbe V."/>
            <person name="Cruveiller S."/>
            <person name="Kunst F."/>
            <person name="Lenoble P."/>
            <person name="Meurice G."/>
            <person name="Sekowska A."/>
            <person name="Vallenet D."/>
            <person name="Wang T."/>
            <person name="Moszer I."/>
            <person name="Medigue C."/>
            <person name="Danchin A."/>
        </authorList>
    </citation>
    <scope>SEQUENCE REVISION TO 9</scope>
</reference>
<reference key="4">
    <citation type="journal article" date="2005" name="J. Bacteriol.">
        <title>The Rok protein of Bacillus subtilis represses genes for cell surface and extracellular functions.</title>
        <authorList>
            <person name="Albano M."/>
            <person name="Smits W.K."/>
            <person name="Ho L.T."/>
            <person name="Kraigher B."/>
            <person name="Mandic-Mulec I."/>
            <person name="Kuipers O.P."/>
            <person name="Dubnau D."/>
        </authorList>
    </citation>
    <scope>TRANSCRIPTION REGULATION</scope>
    <scope>OPERON SUGGESTION</scope>
    <source>
        <strain>168</strain>
    </source>
</reference>
<reference key="5">
    <citation type="journal article" date="2007" name="J. Bacteriol.">
        <title>The yydFGHIJ operon of Bacillus subtilis encodes a peptide that induces the LiaRS two-component system.</title>
        <authorList>
            <person name="Butcher B.G."/>
            <person name="Lin Y.-P."/>
            <person name="Helmann J.D."/>
        </authorList>
    </citation>
    <scope>SUGGESTION OF FUNCTION</scope>
    <scope>OPERON STRUCTURE</scope>
    <source>
        <strain>168</strain>
    </source>
</reference>
<feature type="chain" id="PRO_0000370195" description="Putative peptide zinc metalloprotease protein YydH">
    <location>
        <begin position="1"/>
        <end position="252"/>
    </location>
</feature>
<feature type="transmembrane region" description="Helical" evidence="2">
    <location>
        <begin position="56"/>
        <end position="76"/>
    </location>
</feature>
<feature type="transmembrane region" description="Helical" evidence="2">
    <location>
        <begin position="85"/>
        <end position="105"/>
    </location>
</feature>
<feature type="transmembrane region" description="Helical" evidence="2">
    <location>
        <begin position="152"/>
        <end position="172"/>
    </location>
</feature>
<feature type="transmembrane region" description="Helical" evidence="2">
    <location>
        <begin position="181"/>
        <end position="201"/>
    </location>
</feature>
<feature type="transmembrane region" description="Helical" evidence="2">
    <location>
        <begin position="231"/>
        <end position="251"/>
    </location>
</feature>
<feature type="active site" evidence="3">
    <location>
        <position position="107"/>
    </location>
</feature>
<feature type="binding site" evidence="3">
    <location>
        <position position="106"/>
    </location>
    <ligand>
        <name>Zn(2+)</name>
        <dbReference type="ChEBI" id="CHEBI:29105"/>
        <note>catalytic</note>
    </ligand>
</feature>
<feature type="binding site" evidence="3">
    <location>
        <position position="110"/>
    </location>
    <ligand>
        <name>Zn(2+)</name>
        <dbReference type="ChEBI" id="CHEBI:29105"/>
        <note>catalytic</note>
    </ligand>
</feature>
<feature type="sequence conflict" description="In Ref. 1; BAA11274." evidence="4" ref="1">
    <original>E</original>
    <variation>G</variation>
    <location>
        <position position="9"/>
    </location>
</feature>
<comment type="function">
    <text evidence="4">Required for production of the modified peptide YydF (Probable). May process the precursor form of YydF to release the active peptide (Potential).</text>
</comment>
<comment type="cofactor">
    <cofactor evidence="1">
        <name>Zn(2+)</name>
        <dbReference type="ChEBI" id="CHEBI:29105"/>
    </cofactor>
    <text evidence="1">Binds 1 zinc ion per subunit.</text>
</comment>
<comment type="subcellular location">
    <subcellularLocation>
        <location evidence="4">Cell membrane</location>
        <topology evidence="4">Multi-pass membrane protein</topology>
    </subcellularLocation>
</comment>
<comment type="induction">
    <text>Transcriptionally repressed by rok.</text>
</comment>
<comment type="similarity">
    <text evidence="4">Belongs to the peptidase M50B family.</text>
</comment>
<keyword id="KW-1003">Cell membrane</keyword>
<keyword id="KW-0378">Hydrolase</keyword>
<keyword id="KW-0472">Membrane</keyword>
<keyword id="KW-0479">Metal-binding</keyword>
<keyword id="KW-0482">Metalloprotease</keyword>
<keyword id="KW-0645">Protease</keyword>
<keyword id="KW-1185">Reference proteome</keyword>
<keyword id="KW-0812">Transmembrane</keyword>
<keyword id="KW-1133">Transmembrane helix</keyword>
<keyword id="KW-0862">Zinc</keyword>
<accession>Q45594</accession>
<accession>Q794X1</accession>
<protein>
    <recommendedName>
        <fullName>Putative peptide zinc metalloprotease protein YydH</fullName>
    </recommendedName>
</protein>
<evidence type="ECO:0000250" key="1"/>
<evidence type="ECO:0000255" key="2"/>
<evidence type="ECO:0000255" key="3">
    <source>
        <dbReference type="PROSITE-ProRule" id="PRU10095"/>
    </source>
</evidence>
<evidence type="ECO:0000305" key="4"/>
<organism>
    <name type="scientific">Bacillus subtilis (strain 168)</name>
    <dbReference type="NCBI Taxonomy" id="224308"/>
    <lineage>
        <taxon>Bacteria</taxon>
        <taxon>Bacillati</taxon>
        <taxon>Bacillota</taxon>
        <taxon>Bacilli</taxon>
        <taxon>Bacillales</taxon>
        <taxon>Bacillaceae</taxon>
        <taxon>Bacillus</taxon>
    </lineage>
</organism>
<gene>
    <name type="primary">yydH</name>
    <name type="ordered locus">BSU40160</name>
</gene>